<organism>
    <name type="scientific">Bos taurus</name>
    <name type="common">Bovine</name>
    <dbReference type="NCBI Taxonomy" id="9913"/>
    <lineage>
        <taxon>Eukaryota</taxon>
        <taxon>Metazoa</taxon>
        <taxon>Chordata</taxon>
        <taxon>Craniata</taxon>
        <taxon>Vertebrata</taxon>
        <taxon>Euteleostomi</taxon>
        <taxon>Mammalia</taxon>
        <taxon>Eutheria</taxon>
        <taxon>Laurasiatheria</taxon>
        <taxon>Artiodactyla</taxon>
        <taxon>Ruminantia</taxon>
        <taxon>Pecora</taxon>
        <taxon>Bovidae</taxon>
        <taxon>Bovinae</taxon>
        <taxon>Bos</taxon>
    </lineage>
</organism>
<accession>Q29RP9</accession>
<evidence type="ECO:0000255" key="1">
    <source>
        <dbReference type="HAMAP-Rule" id="MF_03150"/>
    </source>
</evidence>
<evidence type="ECO:0000256" key="2">
    <source>
        <dbReference type="SAM" id="MobiDB-lite"/>
    </source>
</evidence>
<protein>
    <recommendedName>
        <fullName evidence="1">Glutamyl-tRNA(Gln) amidotransferase subunit A, mitochondrial</fullName>
        <shortName evidence="1">Glu-AdT subunit A</shortName>
        <ecNumber evidence="1">6.3.5.7</ecNumber>
    </recommendedName>
    <alternativeName>
        <fullName evidence="1">Glutaminyl-tRNA synthase-like protein 1</fullName>
    </alternativeName>
</protein>
<comment type="function">
    <text evidence="1">Allows the formation of correctly charged Gln-tRNA(Gln) through the transamidation of misacylated Glu-tRNA(Gln) in the mitochondria. The reaction takes place in the presence of glutamine and ATP through an activated gamma-phospho-Glu-tRNA(Gln).</text>
</comment>
<comment type="catalytic activity">
    <reaction evidence="1">
        <text>L-glutamyl-tRNA(Gln) + L-glutamine + ATP + H2O = L-glutaminyl-tRNA(Gln) + L-glutamate + ADP + phosphate + H(+)</text>
        <dbReference type="Rhea" id="RHEA:17521"/>
        <dbReference type="Rhea" id="RHEA-COMP:9681"/>
        <dbReference type="Rhea" id="RHEA-COMP:9684"/>
        <dbReference type="ChEBI" id="CHEBI:15377"/>
        <dbReference type="ChEBI" id="CHEBI:15378"/>
        <dbReference type="ChEBI" id="CHEBI:29985"/>
        <dbReference type="ChEBI" id="CHEBI:30616"/>
        <dbReference type="ChEBI" id="CHEBI:43474"/>
        <dbReference type="ChEBI" id="CHEBI:58359"/>
        <dbReference type="ChEBI" id="CHEBI:78520"/>
        <dbReference type="ChEBI" id="CHEBI:78521"/>
        <dbReference type="ChEBI" id="CHEBI:456216"/>
        <dbReference type="EC" id="6.3.5.7"/>
    </reaction>
</comment>
<comment type="subunit">
    <text evidence="1">Subunit of the heterotrimeric GatCAB amidotransferase (AdT) complex, composed of A (QRSL1), B (GATB) and C (GATC) subunits.</text>
</comment>
<comment type="subcellular location">
    <subcellularLocation>
        <location evidence="1">Mitochondrion</location>
    </subcellularLocation>
</comment>
<comment type="similarity">
    <text evidence="1">Belongs to the amidase family. GatA subfamily.</text>
</comment>
<name>GATA_BOVIN</name>
<proteinExistence type="evidence at transcript level"/>
<dbReference type="EC" id="6.3.5.7" evidence="1"/>
<dbReference type="EMBL" id="BC114078">
    <property type="protein sequence ID" value="AAI14079.1"/>
    <property type="molecule type" value="mRNA"/>
</dbReference>
<dbReference type="RefSeq" id="NP_001039801.1">
    <property type="nucleotide sequence ID" value="NM_001046336.1"/>
</dbReference>
<dbReference type="SMR" id="Q29RP9"/>
<dbReference type="FunCoup" id="Q29RP9">
    <property type="interactions" value="1462"/>
</dbReference>
<dbReference type="STRING" id="9913.ENSBTAP00000023342"/>
<dbReference type="PaxDb" id="9913-ENSBTAP00000023342"/>
<dbReference type="GeneID" id="532822"/>
<dbReference type="KEGG" id="bta:532822"/>
<dbReference type="CTD" id="55278"/>
<dbReference type="eggNOG" id="KOG1211">
    <property type="taxonomic scope" value="Eukaryota"/>
</dbReference>
<dbReference type="InParanoid" id="Q29RP9"/>
<dbReference type="OrthoDB" id="421993at2759"/>
<dbReference type="Proteomes" id="UP000009136">
    <property type="component" value="Unplaced"/>
</dbReference>
<dbReference type="GO" id="GO:0030956">
    <property type="term" value="C:glutamyl-tRNA(Gln) amidotransferase complex"/>
    <property type="evidence" value="ECO:0000318"/>
    <property type="project" value="GO_Central"/>
</dbReference>
<dbReference type="GO" id="GO:0005739">
    <property type="term" value="C:mitochondrion"/>
    <property type="evidence" value="ECO:0000318"/>
    <property type="project" value="GO_Central"/>
</dbReference>
<dbReference type="GO" id="GO:0005524">
    <property type="term" value="F:ATP binding"/>
    <property type="evidence" value="ECO:0007669"/>
    <property type="project" value="UniProtKB-KW"/>
</dbReference>
<dbReference type="GO" id="GO:0050567">
    <property type="term" value="F:glutaminyl-tRNA synthase (glutamine-hydrolyzing) activity"/>
    <property type="evidence" value="ECO:0000318"/>
    <property type="project" value="GO_Central"/>
</dbReference>
<dbReference type="GO" id="GO:0070681">
    <property type="term" value="P:glutaminyl-tRNAGln biosynthesis via transamidation"/>
    <property type="evidence" value="ECO:0000318"/>
    <property type="project" value="GO_Central"/>
</dbReference>
<dbReference type="GO" id="GO:0032543">
    <property type="term" value="P:mitochondrial translation"/>
    <property type="evidence" value="ECO:0000318"/>
    <property type="project" value="GO_Central"/>
</dbReference>
<dbReference type="FunFam" id="3.90.1300.10:FF:000002">
    <property type="entry name" value="Glutamyl-tRNA(Gln) amidotransferase subunit A, mitochondrial"/>
    <property type="match status" value="1"/>
</dbReference>
<dbReference type="Gene3D" id="3.90.1300.10">
    <property type="entry name" value="Amidase signature (AS) domain"/>
    <property type="match status" value="1"/>
</dbReference>
<dbReference type="HAMAP" id="MF_00120">
    <property type="entry name" value="GatA"/>
    <property type="match status" value="1"/>
</dbReference>
<dbReference type="InterPro" id="IPR000120">
    <property type="entry name" value="Amidase"/>
</dbReference>
<dbReference type="InterPro" id="IPR023631">
    <property type="entry name" value="Amidase_dom"/>
</dbReference>
<dbReference type="InterPro" id="IPR036928">
    <property type="entry name" value="AS_sf"/>
</dbReference>
<dbReference type="InterPro" id="IPR004412">
    <property type="entry name" value="GatA"/>
</dbReference>
<dbReference type="NCBIfam" id="TIGR00132">
    <property type="entry name" value="gatA"/>
    <property type="match status" value="1"/>
</dbReference>
<dbReference type="PANTHER" id="PTHR11895:SF7">
    <property type="entry name" value="GLUTAMYL-TRNA(GLN) AMIDOTRANSFERASE SUBUNIT A, MITOCHONDRIAL"/>
    <property type="match status" value="1"/>
</dbReference>
<dbReference type="PANTHER" id="PTHR11895">
    <property type="entry name" value="TRANSAMIDASE"/>
    <property type="match status" value="1"/>
</dbReference>
<dbReference type="Pfam" id="PF01425">
    <property type="entry name" value="Amidase"/>
    <property type="match status" value="2"/>
</dbReference>
<dbReference type="SUPFAM" id="SSF75304">
    <property type="entry name" value="Amidase signature (AS) enzymes"/>
    <property type="match status" value="1"/>
</dbReference>
<feature type="chain" id="PRO_0000316766" description="Glutamyl-tRNA(Gln) amidotransferase subunit A, mitochondrial">
    <location>
        <begin position="1"/>
        <end position="526"/>
    </location>
</feature>
<feature type="region of interest" description="Disordered" evidence="2">
    <location>
        <begin position="147"/>
        <end position="166"/>
    </location>
</feature>
<feature type="active site" description="Charge relay system" evidence="1">
    <location>
        <position position="76"/>
    </location>
</feature>
<feature type="active site" description="Charge relay system" evidence="1">
    <location>
        <position position="171"/>
    </location>
</feature>
<feature type="active site" description="Acyl-ester intermediate" evidence="1">
    <location>
        <position position="195"/>
    </location>
</feature>
<keyword id="KW-0067">ATP-binding</keyword>
<keyword id="KW-0436">Ligase</keyword>
<keyword id="KW-0496">Mitochondrion</keyword>
<keyword id="KW-0547">Nucleotide-binding</keyword>
<keyword id="KW-0648">Protein biosynthesis</keyword>
<keyword id="KW-1185">Reference proteome</keyword>
<reference key="1">
    <citation type="submission" date="2006-02" db="EMBL/GenBank/DDBJ databases">
        <authorList>
            <consortium name="NIH - Mammalian Gene Collection (MGC) project"/>
        </authorList>
    </citation>
    <scope>NUCLEOTIDE SEQUENCE [LARGE SCALE MRNA]</scope>
    <source>
        <strain>Hereford</strain>
        <tissue>Heart ventricle</tissue>
    </source>
</reference>
<sequence>MLGRTLREVSVELKQGQITPTELCQRCLSLIKKTKFLNAYITVSEEVALKQAEESEKRYKKGHSLGDLDGIPIAVKDNFSTSGIETTCASNMLKGYVPPYNATVVQKLLDQGALLMGKTNLDEFAMGSGSTDGIFGPVKNPWSYSKQYREKRKQNSHSENEDSNWLITGGSSGGSAAAVSAFTCFAALGSDTGGSTRNPAAHCGVVGLKPSYGLVSRHGLIPLVNSMDVPGILTRCVDDAATVLGVLAGHDPKDSTTIQDPVKPFTLPSLTDVSKLCIGIPKEYLTPELSSEVQSLWSKAANLFESEGAKVTEVSLPHTSYSIVCYHVLCTSEVASNMARFDGLEYGHRCDSDVSTEAMYAATRREGFNDVVRGRILSGNFFLLKENYENYFVKAQKVRRLIANDFVNVFNSGVDVLLTPTTLSEAVPYTEFIKEDNRTRSAQDDIFTQAVNMAGLPAVSVPVALSSQGLPIGLQFIGRAFCDQQLLIVAKWFEKQVQFPVIQLQELMDDCSSVFENEKLASVSLK</sequence>
<gene>
    <name evidence="1" type="primary">QRSL1</name>
</gene>